<accession>B1MBV2</accession>
<comment type="function">
    <text evidence="1">The alpha subunit is responsible for the aldol cleavage of indoleglycerol phosphate to indole and glyceraldehyde 3-phosphate.</text>
</comment>
<comment type="catalytic activity">
    <reaction evidence="1">
        <text>(1S,2R)-1-C-(indol-3-yl)glycerol 3-phosphate + L-serine = D-glyceraldehyde 3-phosphate + L-tryptophan + H2O</text>
        <dbReference type="Rhea" id="RHEA:10532"/>
        <dbReference type="ChEBI" id="CHEBI:15377"/>
        <dbReference type="ChEBI" id="CHEBI:33384"/>
        <dbReference type="ChEBI" id="CHEBI:57912"/>
        <dbReference type="ChEBI" id="CHEBI:58866"/>
        <dbReference type="ChEBI" id="CHEBI:59776"/>
        <dbReference type="EC" id="4.2.1.20"/>
    </reaction>
</comment>
<comment type="pathway">
    <text evidence="1">Amino-acid biosynthesis; L-tryptophan biosynthesis; L-tryptophan from chorismate: step 5/5.</text>
</comment>
<comment type="subunit">
    <text evidence="1">Tetramer of two alpha and two beta chains.</text>
</comment>
<comment type="similarity">
    <text evidence="1">Belongs to the TrpA family.</text>
</comment>
<reference key="1">
    <citation type="journal article" date="2009" name="PLoS ONE">
        <title>Non mycobacterial virulence genes in the genome of the emerging pathogen Mycobacterium abscessus.</title>
        <authorList>
            <person name="Ripoll F."/>
            <person name="Pasek S."/>
            <person name="Schenowitz C."/>
            <person name="Dossat C."/>
            <person name="Barbe V."/>
            <person name="Rottman M."/>
            <person name="Macheras E."/>
            <person name="Heym B."/>
            <person name="Herrmann J.L."/>
            <person name="Daffe M."/>
            <person name="Brosch R."/>
            <person name="Risler J.L."/>
            <person name="Gaillard J.L."/>
        </authorList>
    </citation>
    <scope>NUCLEOTIDE SEQUENCE [LARGE SCALE GENOMIC DNA]</scope>
    <source>
        <strain>ATCC 19977 / DSM 44196 / CCUG 20993 / CIP 104536 / JCM 13569 / NCTC 13031 / TMC 1543 / L948</strain>
    </source>
</reference>
<protein>
    <recommendedName>
        <fullName evidence="1">Tryptophan synthase alpha chain</fullName>
        <ecNumber evidence="1">4.2.1.20</ecNumber>
    </recommendedName>
</protein>
<keyword id="KW-0028">Amino-acid biosynthesis</keyword>
<keyword id="KW-0057">Aromatic amino acid biosynthesis</keyword>
<keyword id="KW-0456">Lyase</keyword>
<keyword id="KW-1185">Reference proteome</keyword>
<keyword id="KW-0822">Tryptophan biosynthesis</keyword>
<evidence type="ECO:0000255" key="1">
    <source>
        <dbReference type="HAMAP-Rule" id="MF_00131"/>
    </source>
</evidence>
<name>TRPA_MYCA9</name>
<dbReference type="EC" id="4.2.1.20" evidence="1"/>
<dbReference type="EMBL" id="CU458896">
    <property type="protein sequence ID" value="CAM62723.1"/>
    <property type="molecule type" value="Genomic_DNA"/>
</dbReference>
<dbReference type="RefSeq" id="WP_005075867.1">
    <property type="nucleotide sequence ID" value="NZ_MLCG01000003.1"/>
</dbReference>
<dbReference type="SMR" id="B1MBV2"/>
<dbReference type="GeneID" id="93379574"/>
<dbReference type="KEGG" id="mab:MAB_2643c"/>
<dbReference type="UniPathway" id="UPA00035">
    <property type="reaction ID" value="UER00044"/>
</dbReference>
<dbReference type="Proteomes" id="UP000007137">
    <property type="component" value="Chromosome"/>
</dbReference>
<dbReference type="GO" id="GO:0005829">
    <property type="term" value="C:cytosol"/>
    <property type="evidence" value="ECO:0007669"/>
    <property type="project" value="TreeGrafter"/>
</dbReference>
<dbReference type="GO" id="GO:0004834">
    <property type="term" value="F:tryptophan synthase activity"/>
    <property type="evidence" value="ECO:0007669"/>
    <property type="project" value="UniProtKB-UniRule"/>
</dbReference>
<dbReference type="CDD" id="cd04724">
    <property type="entry name" value="Tryptophan_synthase_alpha"/>
    <property type="match status" value="1"/>
</dbReference>
<dbReference type="FunFam" id="3.20.20.70:FF:000037">
    <property type="entry name" value="Tryptophan synthase alpha chain"/>
    <property type="match status" value="1"/>
</dbReference>
<dbReference type="Gene3D" id="3.20.20.70">
    <property type="entry name" value="Aldolase class I"/>
    <property type="match status" value="1"/>
</dbReference>
<dbReference type="HAMAP" id="MF_00131">
    <property type="entry name" value="Trp_synth_alpha"/>
    <property type="match status" value="1"/>
</dbReference>
<dbReference type="InterPro" id="IPR013785">
    <property type="entry name" value="Aldolase_TIM"/>
</dbReference>
<dbReference type="InterPro" id="IPR011060">
    <property type="entry name" value="RibuloseP-bd_barrel"/>
</dbReference>
<dbReference type="InterPro" id="IPR018204">
    <property type="entry name" value="Trp_synthase_alpha_AS"/>
</dbReference>
<dbReference type="InterPro" id="IPR002028">
    <property type="entry name" value="Trp_synthase_suA"/>
</dbReference>
<dbReference type="NCBIfam" id="TIGR00262">
    <property type="entry name" value="trpA"/>
    <property type="match status" value="1"/>
</dbReference>
<dbReference type="PANTHER" id="PTHR43406:SF1">
    <property type="entry name" value="TRYPTOPHAN SYNTHASE ALPHA CHAIN, CHLOROPLASTIC"/>
    <property type="match status" value="1"/>
</dbReference>
<dbReference type="PANTHER" id="PTHR43406">
    <property type="entry name" value="TRYPTOPHAN SYNTHASE, ALPHA CHAIN"/>
    <property type="match status" value="1"/>
</dbReference>
<dbReference type="Pfam" id="PF00290">
    <property type="entry name" value="Trp_syntA"/>
    <property type="match status" value="1"/>
</dbReference>
<dbReference type="SUPFAM" id="SSF51366">
    <property type="entry name" value="Ribulose-phoshate binding barrel"/>
    <property type="match status" value="1"/>
</dbReference>
<dbReference type="PROSITE" id="PS00167">
    <property type="entry name" value="TRP_SYNTHASE_ALPHA"/>
    <property type="match status" value="1"/>
</dbReference>
<gene>
    <name evidence="1" type="primary">trpA</name>
    <name type="ordered locus">MAB_2643c</name>
</gene>
<proteinExistence type="inferred from homology"/>
<sequence length="262" mass="27046">MTQPGRLTEVFDKCRAEERAALIGYLPNGYPDLDTSIELMTTLVRGGCDIIEVGIAYSDPMMDGPMIAAAAETALANGVRVADVFTTVRAITDAGGHAVVMSYWNPVLRYGVDAFARELAAAGGLGIITPDLIPDEADDWIAASDAHDLDRIFLVAPSSTPERLERTIGACRGFVYAASTMGVTGARDAVSNAAPALVSRVREVSDIAVGVGLGVRSGAQAAEIAAYADGVIVGSALVAAAPQGPAAVRSLAEELATGVRRA</sequence>
<organism>
    <name type="scientific">Mycobacteroides abscessus (strain ATCC 19977 / DSM 44196 / CCUG 20993 / CIP 104536 / JCM 13569 / NCTC 13031 / TMC 1543 / L948)</name>
    <name type="common">Mycobacterium abscessus</name>
    <dbReference type="NCBI Taxonomy" id="561007"/>
    <lineage>
        <taxon>Bacteria</taxon>
        <taxon>Bacillati</taxon>
        <taxon>Actinomycetota</taxon>
        <taxon>Actinomycetes</taxon>
        <taxon>Mycobacteriales</taxon>
        <taxon>Mycobacteriaceae</taxon>
        <taxon>Mycobacteroides</taxon>
        <taxon>Mycobacteroides abscessus</taxon>
    </lineage>
</organism>
<feature type="chain" id="PRO_1000095732" description="Tryptophan synthase alpha chain">
    <location>
        <begin position="1"/>
        <end position="262"/>
    </location>
</feature>
<feature type="active site" description="Proton acceptor" evidence="1">
    <location>
        <position position="52"/>
    </location>
</feature>
<feature type="active site" description="Proton acceptor" evidence="1">
    <location>
        <position position="63"/>
    </location>
</feature>